<organism>
    <name type="scientific">Salmonella gallinarum (strain 287/91 / NCTC 13346)</name>
    <dbReference type="NCBI Taxonomy" id="550538"/>
    <lineage>
        <taxon>Bacteria</taxon>
        <taxon>Pseudomonadati</taxon>
        <taxon>Pseudomonadota</taxon>
        <taxon>Gammaproteobacteria</taxon>
        <taxon>Enterobacterales</taxon>
        <taxon>Enterobacteriaceae</taxon>
        <taxon>Salmonella</taxon>
    </lineage>
</organism>
<protein>
    <recommendedName>
        <fullName evidence="1">UPF0259 membrane protein YciC</fullName>
    </recommendedName>
</protein>
<name>YCIC_SALG2</name>
<feature type="chain" id="PRO_1000136591" description="UPF0259 membrane protein YciC">
    <location>
        <begin position="1"/>
        <end position="247"/>
    </location>
</feature>
<feature type="transmembrane region" description="Helical" evidence="1">
    <location>
        <begin position="20"/>
        <end position="40"/>
    </location>
</feature>
<feature type="transmembrane region" description="Helical" evidence="1">
    <location>
        <begin position="87"/>
        <end position="107"/>
    </location>
</feature>
<feature type="transmembrane region" description="Helical" evidence="1">
    <location>
        <begin position="118"/>
        <end position="140"/>
    </location>
</feature>
<feature type="transmembrane region" description="Helical" evidence="1">
    <location>
        <begin position="152"/>
        <end position="172"/>
    </location>
</feature>
<feature type="transmembrane region" description="Helical" evidence="1">
    <location>
        <begin position="194"/>
        <end position="214"/>
    </location>
</feature>
<feature type="transmembrane region" description="Helical" evidence="1">
    <location>
        <begin position="219"/>
        <end position="239"/>
    </location>
</feature>
<comment type="subcellular location">
    <subcellularLocation>
        <location evidence="1">Cell inner membrane</location>
        <topology evidence="1">Multi-pass membrane protein</topology>
    </subcellularLocation>
</comment>
<comment type="similarity">
    <text evidence="1">Belongs to the UPF0259 family.</text>
</comment>
<keyword id="KW-0997">Cell inner membrane</keyword>
<keyword id="KW-1003">Cell membrane</keyword>
<keyword id="KW-0472">Membrane</keyword>
<keyword id="KW-0812">Transmembrane</keyword>
<keyword id="KW-1133">Transmembrane helix</keyword>
<gene>
    <name evidence="1" type="primary">yciC</name>
    <name type="ordered locus">SG1381</name>
</gene>
<proteinExistence type="inferred from homology"/>
<dbReference type="EMBL" id="AM933173">
    <property type="protein sequence ID" value="CAR37254.1"/>
    <property type="molecule type" value="Genomic_DNA"/>
</dbReference>
<dbReference type="RefSeq" id="WP_000028507.1">
    <property type="nucleotide sequence ID" value="NC_011274.1"/>
</dbReference>
<dbReference type="KEGG" id="seg:SG1381"/>
<dbReference type="HOGENOM" id="CLU_073287_0_0_6"/>
<dbReference type="Proteomes" id="UP000008321">
    <property type="component" value="Chromosome"/>
</dbReference>
<dbReference type="GO" id="GO:0005886">
    <property type="term" value="C:plasma membrane"/>
    <property type="evidence" value="ECO:0007669"/>
    <property type="project" value="UniProtKB-SubCell"/>
</dbReference>
<dbReference type="HAMAP" id="MF_01067">
    <property type="entry name" value="UPF0259"/>
    <property type="match status" value="1"/>
</dbReference>
<dbReference type="InterPro" id="IPR009627">
    <property type="entry name" value="UPF0259"/>
</dbReference>
<dbReference type="NCBIfam" id="NF002774">
    <property type="entry name" value="PRK02868.1"/>
    <property type="match status" value="1"/>
</dbReference>
<dbReference type="Pfam" id="PF06790">
    <property type="entry name" value="UPF0259"/>
    <property type="match status" value="1"/>
</dbReference>
<sequence length="247" mass="26371">MSITAKSVYRDAGNFFRNQFITILLVSLLCAFITVVLGHAFSPSDAQIAQLSEGEHLAGSAGLFELVQNMTPEQQQILLRASAASTFSGLIGNAILAGGIILMIQLVSAGHRVSALRAIGASAPALPKLFILIFLTTLLVQIGIMLIVVPGIIMAIVLALAPVMLVEEKMGVFAAMRSSMRLAWANMRLVAPAVIGWLLAKTLLLLFAPSFAVLTPNVGAVLANTLSNLISAVLLIYLFRLYMLIRQ</sequence>
<evidence type="ECO:0000255" key="1">
    <source>
        <dbReference type="HAMAP-Rule" id="MF_01067"/>
    </source>
</evidence>
<reference key="1">
    <citation type="journal article" date="2008" name="Genome Res.">
        <title>Comparative genome analysis of Salmonella enteritidis PT4 and Salmonella gallinarum 287/91 provides insights into evolutionary and host adaptation pathways.</title>
        <authorList>
            <person name="Thomson N.R."/>
            <person name="Clayton D.J."/>
            <person name="Windhorst D."/>
            <person name="Vernikos G."/>
            <person name="Davidson S."/>
            <person name="Churcher C."/>
            <person name="Quail M.A."/>
            <person name="Stevens M."/>
            <person name="Jones M.A."/>
            <person name="Watson M."/>
            <person name="Barron A."/>
            <person name="Layton A."/>
            <person name="Pickard D."/>
            <person name="Kingsley R.A."/>
            <person name="Bignell A."/>
            <person name="Clark L."/>
            <person name="Harris B."/>
            <person name="Ormond D."/>
            <person name="Abdellah Z."/>
            <person name="Brooks K."/>
            <person name="Cherevach I."/>
            <person name="Chillingworth T."/>
            <person name="Woodward J."/>
            <person name="Norberczak H."/>
            <person name="Lord A."/>
            <person name="Arrowsmith C."/>
            <person name="Jagels K."/>
            <person name="Moule S."/>
            <person name="Mungall K."/>
            <person name="Saunders M."/>
            <person name="Whitehead S."/>
            <person name="Chabalgoity J.A."/>
            <person name="Maskell D."/>
            <person name="Humphreys T."/>
            <person name="Roberts M."/>
            <person name="Barrow P.A."/>
            <person name="Dougan G."/>
            <person name="Parkhill J."/>
        </authorList>
    </citation>
    <scope>NUCLEOTIDE SEQUENCE [LARGE SCALE GENOMIC DNA]</scope>
    <source>
        <strain>287/91 / NCTC 13346</strain>
    </source>
</reference>
<accession>B5R6L7</accession>